<dbReference type="EC" id="3.6.4.13"/>
<dbReference type="EMBL" id="AM270075">
    <property type="protein sequence ID" value="CAK38656.1"/>
    <property type="molecule type" value="Genomic_DNA"/>
</dbReference>
<dbReference type="RefSeq" id="XP_001401758.1">
    <property type="nucleotide sequence ID" value="XM_001401721.1"/>
</dbReference>
<dbReference type="SMR" id="A2QIL2"/>
<dbReference type="EnsemblFungi" id="CAK38656">
    <property type="protein sequence ID" value="CAK38656"/>
    <property type="gene ID" value="An04g03920"/>
</dbReference>
<dbReference type="GeneID" id="4990798"/>
<dbReference type="KEGG" id="ang:An04g03920"/>
<dbReference type="VEuPathDB" id="FungiDB:An04g03920"/>
<dbReference type="HOGENOM" id="CLU_003041_11_3_1"/>
<dbReference type="Proteomes" id="UP000006706">
    <property type="component" value="Chromosome 6L"/>
</dbReference>
<dbReference type="GO" id="GO:0005737">
    <property type="term" value="C:cytoplasm"/>
    <property type="evidence" value="ECO:0007669"/>
    <property type="project" value="UniProtKB-SubCell"/>
</dbReference>
<dbReference type="GO" id="GO:0005634">
    <property type="term" value="C:nucleus"/>
    <property type="evidence" value="ECO:0007669"/>
    <property type="project" value="UniProtKB-SubCell"/>
</dbReference>
<dbReference type="GO" id="GO:0005524">
    <property type="term" value="F:ATP binding"/>
    <property type="evidence" value="ECO:0007669"/>
    <property type="project" value="UniProtKB-KW"/>
</dbReference>
<dbReference type="GO" id="GO:0016887">
    <property type="term" value="F:ATP hydrolysis activity"/>
    <property type="evidence" value="ECO:0007669"/>
    <property type="project" value="RHEA"/>
</dbReference>
<dbReference type="GO" id="GO:0003676">
    <property type="term" value="F:nucleic acid binding"/>
    <property type="evidence" value="ECO:0007669"/>
    <property type="project" value="InterPro"/>
</dbReference>
<dbReference type="GO" id="GO:0003724">
    <property type="term" value="F:RNA helicase activity"/>
    <property type="evidence" value="ECO:0007669"/>
    <property type="project" value="UniProtKB-EC"/>
</dbReference>
<dbReference type="GO" id="GO:0006397">
    <property type="term" value="P:mRNA processing"/>
    <property type="evidence" value="ECO:0007669"/>
    <property type="project" value="UniProtKB-KW"/>
</dbReference>
<dbReference type="GO" id="GO:0008380">
    <property type="term" value="P:RNA splicing"/>
    <property type="evidence" value="ECO:0007669"/>
    <property type="project" value="UniProtKB-KW"/>
</dbReference>
<dbReference type="CDD" id="cd17945">
    <property type="entry name" value="DEADc_DDX23"/>
    <property type="match status" value="1"/>
</dbReference>
<dbReference type="CDD" id="cd18787">
    <property type="entry name" value="SF2_C_DEAD"/>
    <property type="match status" value="1"/>
</dbReference>
<dbReference type="FunFam" id="3.40.50.300:FF:000322">
    <property type="entry name" value="probable ATP-dependent RNA helicase DDX23"/>
    <property type="match status" value="1"/>
</dbReference>
<dbReference type="Gene3D" id="3.40.50.300">
    <property type="entry name" value="P-loop containing nucleotide triphosphate hydrolases"/>
    <property type="match status" value="2"/>
</dbReference>
<dbReference type="InterPro" id="IPR011545">
    <property type="entry name" value="DEAD/DEAH_box_helicase_dom"/>
</dbReference>
<dbReference type="InterPro" id="IPR014001">
    <property type="entry name" value="Helicase_ATP-bd"/>
</dbReference>
<dbReference type="InterPro" id="IPR001650">
    <property type="entry name" value="Helicase_C-like"/>
</dbReference>
<dbReference type="InterPro" id="IPR027417">
    <property type="entry name" value="P-loop_NTPase"/>
</dbReference>
<dbReference type="InterPro" id="IPR000629">
    <property type="entry name" value="RNA-helicase_DEAD-box_CS"/>
</dbReference>
<dbReference type="InterPro" id="IPR014014">
    <property type="entry name" value="RNA_helicase_DEAD_Q_motif"/>
</dbReference>
<dbReference type="PANTHER" id="PTHR47958">
    <property type="entry name" value="ATP-DEPENDENT RNA HELICASE DBP3"/>
    <property type="match status" value="1"/>
</dbReference>
<dbReference type="Pfam" id="PF25430">
    <property type="entry name" value="DDX23"/>
    <property type="match status" value="1"/>
</dbReference>
<dbReference type="Pfam" id="PF00270">
    <property type="entry name" value="DEAD"/>
    <property type="match status" value="1"/>
</dbReference>
<dbReference type="Pfam" id="PF00271">
    <property type="entry name" value="Helicase_C"/>
    <property type="match status" value="1"/>
</dbReference>
<dbReference type="SMART" id="SM00487">
    <property type="entry name" value="DEXDc"/>
    <property type="match status" value="1"/>
</dbReference>
<dbReference type="SMART" id="SM00490">
    <property type="entry name" value="HELICc"/>
    <property type="match status" value="1"/>
</dbReference>
<dbReference type="SUPFAM" id="SSF52540">
    <property type="entry name" value="P-loop containing nucleoside triphosphate hydrolases"/>
    <property type="match status" value="1"/>
</dbReference>
<dbReference type="PROSITE" id="PS00039">
    <property type="entry name" value="DEAD_ATP_HELICASE"/>
    <property type="match status" value="1"/>
</dbReference>
<dbReference type="PROSITE" id="PS51192">
    <property type="entry name" value="HELICASE_ATP_BIND_1"/>
    <property type="match status" value="1"/>
</dbReference>
<dbReference type="PROSITE" id="PS51194">
    <property type="entry name" value="HELICASE_CTER"/>
    <property type="match status" value="1"/>
</dbReference>
<dbReference type="PROSITE" id="PS51195">
    <property type="entry name" value="Q_MOTIF"/>
    <property type="match status" value="1"/>
</dbReference>
<feature type="chain" id="PRO_0000282479" description="Pre-mRNA-splicing ATP-dependent RNA helicase prp28">
    <location>
        <begin position="1"/>
        <end position="810"/>
    </location>
</feature>
<feature type="domain" description="Helicase ATP-binding" evidence="2">
    <location>
        <begin position="403"/>
        <end position="609"/>
    </location>
</feature>
<feature type="domain" description="Helicase C-terminal" evidence="3">
    <location>
        <begin position="620"/>
        <end position="783"/>
    </location>
</feature>
<feature type="region of interest" description="Disordered" evidence="4">
    <location>
        <begin position="1"/>
        <end position="210"/>
    </location>
</feature>
<feature type="region of interest" description="Disordered" evidence="4">
    <location>
        <begin position="778"/>
        <end position="810"/>
    </location>
</feature>
<feature type="short sequence motif" description="Q motif">
    <location>
        <begin position="372"/>
        <end position="400"/>
    </location>
</feature>
<feature type="short sequence motif" description="DEAD box">
    <location>
        <begin position="531"/>
        <end position="534"/>
    </location>
</feature>
<feature type="compositionally biased region" description="Polar residues" evidence="4">
    <location>
        <begin position="1"/>
        <end position="10"/>
    </location>
</feature>
<feature type="compositionally biased region" description="Pro residues" evidence="4">
    <location>
        <begin position="14"/>
        <end position="62"/>
    </location>
</feature>
<feature type="compositionally biased region" description="Basic and acidic residues" evidence="4">
    <location>
        <begin position="86"/>
        <end position="95"/>
    </location>
</feature>
<feature type="compositionally biased region" description="Basic and acidic residues" evidence="4">
    <location>
        <begin position="105"/>
        <end position="119"/>
    </location>
</feature>
<feature type="compositionally biased region" description="Polar residues" evidence="4">
    <location>
        <begin position="141"/>
        <end position="150"/>
    </location>
</feature>
<feature type="compositionally biased region" description="Gly residues" evidence="4">
    <location>
        <begin position="801"/>
        <end position="810"/>
    </location>
</feature>
<feature type="binding site" evidence="2">
    <location>
        <begin position="416"/>
        <end position="423"/>
    </location>
    <ligand>
        <name>ATP</name>
        <dbReference type="ChEBI" id="CHEBI:30616"/>
    </ligand>
</feature>
<protein>
    <recommendedName>
        <fullName>Pre-mRNA-splicing ATP-dependent RNA helicase prp28</fullName>
        <ecNumber>3.6.4.13</ecNumber>
    </recommendedName>
</protein>
<reference key="1">
    <citation type="journal article" date="2007" name="Nat. Biotechnol.">
        <title>Genome sequencing and analysis of the versatile cell factory Aspergillus niger CBS 513.88.</title>
        <authorList>
            <person name="Pel H.J."/>
            <person name="de Winde J.H."/>
            <person name="Archer D.B."/>
            <person name="Dyer P.S."/>
            <person name="Hofmann G."/>
            <person name="Schaap P.J."/>
            <person name="Turner G."/>
            <person name="de Vries R.P."/>
            <person name="Albang R."/>
            <person name="Albermann K."/>
            <person name="Andersen M.R."/>
            <person name="Bendtsen J.D."/>
            <person name="Benen J.A.E."/>
            <person name="van den Berg M."/>
            <person name="Breestraat S."/>
            <person name="Caddick M.X."/>
            <person name="Contreras R."/>
            <person name="Cornell M."/>
            <person name="Coutinho P.M."/>
            <person name="Danchin E.G.J."/>
            <person name="Debets A.J.M."/>
            <person name="Dekker P."/>
            <person name="van Dijck P.W.M."/>
            <person name="van Dijk A."/>
            <person name="Dijkhuizen L."/>
            <person name="Driessen A.J.M."/>
            <person name="d'Enfert C."/>
            <person name="Geysens S."/>
            <person name="Goosen C."/>
            <person name="Groot G.S.P."/>
            <person name="de Groot P.W.J."/>
            <person name="Guillemette T."/>
            <person name="Henrissat B."/>
            <person name="Herweijer M."/>
            <person name="van den Hombergh J.P.T.W."/>
            <person name="van den Hondel C.A.M.J.J."/>
            <person name="van der Heijden R.T.J.M."/>
            <person name="van der Kaaij R.M."/>
            <person name="Klis F.M."/>
            <person name="Kools H.J."/>
            <person name="Kubicek C.P."/>
            <person name="van Kuyk P.A."/>
            <person name="Lauber J."/>
            <person name="Lu X."/>
            <person name="van der Maarel M.J.E.C."/>
            <person name="Meulenberg R."/>
            <person name="Menke H."/>
            <person name="Mortimer M.A."/>
            <person name="Nielsen J."/>
            <person name="Oliver S.G."/>
            <person name="Olsthoorn M."/>
            <person name="Pal K."/>
            <person name="van Peij N.N.M.E."/>
            <person name="Ram A.F.J."/>
            <person name="Rinas U."/>
            <person name="Roubos J.A."/>
            <person name="Sagt C.M.J."/>
            <person name="Schmoll M."/>
            <person name="Sun J."/>
            <person name="Ussery D."/>
            <person name="Varga J."/>
            <person name="Vervecken W."/>
            <person name="van de Vondervoort P.J.J."/>
            <person name="Wedler H."/>
            <person name="Woesten H.A.B."/>
            <person name="Zeng A.-P."/>
            <person name="van Ooyen A.J.J."/>
            <person name="Visser J."/>
            <person name="Stam H."/>
        </authorList>
    </citation>
    <scope>NUCLEOTIDE SEQUENCE [LARGE SCALE GENOMIC DNA]</scope>
    <source>
        <strain>ATCC MYA-4892 / CBS 513.88 / FGSC A1513</strain>
    </source>
</reference>
<organism>
    <name type="scientific">Aspergillus niger (strain ATCC MYA-4892 / CBS 513.88 / FGSC A1513)</name>
    <dbReference type="NCBI Taxonomy" id="425011"/>
    <lineage>
        <taxon>Eukaryota</taxon>
        <taxon>Fungi</taxon>
        <taxon>Dikarya</taxon>
        <taxon>Ascomycota</taxon>
        <taxon>Pezizomycotina</taxon>
        <taxon>Eurotiomycetes</taxon>
        <taxon>Eurotiomycetidae</taxon>
        <taxon>Eurotiales</taxon>
        <taxon>Aspergillaceae</taxon>
        <taxon>Aspergillus</taxon>
        <taxon>Aspergillus subgen. Circumdati</taxon>
    </lineage>
</organism>
<evidence type="ECO:0000250" key="1"/>
<evidence type="ECO:0000255" key="2">
    <source>
        <dbReference type="PROSITE-ProRule" id="PRU00541"/>
    </source>
</evidence>
<evidence type="ECO:0000255" key="3">
    <source>
        <dbReference type="PROSITE-ProRule" id="PRU00542"/>
    </source>
</evidence>
<evidence type="ECO:0000256" key="4">
    <source>
        <dbReference type="SAM" id="MobiDB-lite"/>
    </source>
</evidence>
<evidence type="ECO:0000305" key="5"/>
<accession>A2QIL2</accession>
<keyword id="KW-0067">ATP-binding</keyword>
<keyword id="KW-0963">Cytoplasm</keyword>
<keyword id="KW-0347">Helicase</keyword>
<keyword id="KW-0378">Hydrolase</keyword>
<keyword id="KW-0507">mRNA processing</keyword>
<keyword id="KW-0508">mRNA splicing</keyword>
<keyword id="KW-0547">Nucleotide-binding</keyword>
<keyword id="KW-0539">Nucleus</keyword>
<keyword id="KW-1185">Reference proteome</keyword>
<comment type="function">
    <text evidence="1">ATP-dependent RNA helicase involved in mRNA splicing. May destabilize the U1/5'-splice site duplex to permit an effective competition for the 5'-splice site by the U6 snRNA, resulting in the switch between U1 and U6 at the 5'-splice site. May also act to unwind the U4/U6 base-pairing interaction in the U4/U6/U5 snRNP, facilitating the first covalent step of splicing (By similarity).</text>
</comment>
<comment type="catalytic activity">
    <reaction>
        <text>ATP + H2O = ADP + phosphate + H(+)</text>
        <dbReference type="Rhea" id="RHEA:13065"/>
        <dbReference type="ChEBI" id="CHEBI:15377"/>
        <dbReference type="ChEBI" id="CHEBI:15378"/>
        <dbReference type="ChEBI" id="CHEBI:30616"/>
        <dbReference type="ChEBI" id="CHEBI:43474"/>
        <dbReference type="ChEBI" id="CHEBI:456216"/>
        <dbReference type="EC" id="3.6.4.13"/>
    </reaction>
</comment>
<comment type="subunit">
    <text evidence="1">Component of the U5 snRNP complex.</text>
</comment>
<comment type="subcellular location">
    <subcellularLocation>
        <location evidence="1">Cytoplasm</location>
    </subcellularLocation>
    <subcellularLocation>
        <location evidence="1">Nucleus</location>
    </subcellularLocation>
</comment>
<comment type="domain">
    <text>The Q motif is unique to and characteristic of the DEAD box family of RNA helicases and controls ATP binding and hydrolysis.</text>
</comment>
<comment type="similarity">
    <text evidence="5">Belongs to the DEAD box helicase family. DDX23/PRP28 subfamily.</text>
</comment>
<name>PRP28_ASPNC</name>
<gene>
    <name type="primary">prp28</name>
    <name type="ORF">An04g03920</name>
</gene>
<proteinExistence type="inferred from homology"/>
<sequence>MDGIMTNGSSEAHPPMPPPEPIERPPTPPPPPPEDSALPPPPPDTSAPPPPPEDLPPAPPPETEPKKKKVGWGTKRPAPTPLSVEELVRKKREADAAAAKPKFLSKKEREKLALEKRAQEVAATRRLKSEHASNGVDRSATHSPSVSSEGPNGDARSIPTGPRAMRNSDAAPTAPAAMRHSQSHNKNYDLAPPPPPKSMSFGLTSGKGDSRFVDEDEAAAQAALVKQRYMGADQTSNFSAKKKRKRTTDRKFNFEWNAEEDTSGDYNPLYQHRHETNFFGRGRLAGFGDDVAESVAHKYARALEDRDREAGSIRAREILEMERRRREESTRNQLDKHWSEKKLEHMRERDWRIFKEDFNISTKGGSVPNPMRSWDESNLPKRLMELINRVGYKEPTPIQRAAIPIAMQNRDLIGVAVTGSGKTAAFLLPLLCYIAELPRIDEFEWRKADGPYAIVLAPTRELAQQIEIEAKKFTGPLGFNVVSIVGGHSLEEQAYSLRDGAEIIIATPGRLVDCIERRILVLSQCCYVIMDEADRMIDLGFEEPVNKILDALPVSNEKPDSEDAENPLAMSRHINHDQHRYRQTMMYTATMPTAVERIARKYLRRPAIVTIGSAGEAVDTVEQRVEMIAGEDKRKKRLGDILSSGEFRAPIIVFVNIKRNCDAIAREIKQWGFSSVTLHGSKTQDQREAALASVRNGTTDVLVATDLAGRGIDVPDVSLVVNFNMATSIESYTHRIGRTGRAGKSGVAITFLGNEDADVMYDLKQMLMKSPISRVPEELRKHEAAQSKPTRGFSSKKNNEEGGGGGKVGW</sequence>